<dbReference type="PIR" id="A92810">
    <property type="entry name" value="AVMS57"/>
</dbReference>
<dbReference type="SMR" id="P01800"/>
<dbReference type="FunCoup" id="P01800">
    <property type="interactions" value="529"/>
</dbReference>
<dbReference type="InParanoid" id="P01800"/>
<dbReference type="Proteomes" id="UP000000589">
    <property type="component" value="Unplaced"/>
</dbReference>
<dbReference type="RNAct" id="P01800">
    <property type="molecule type" value="protein"/>
</dbReference>
<dbReference type="GO" id="GO:0005576">
    <property type="term" value="C:extracellular region"/>
    <property type="evidence" value="ECO:0007669"/>
    <property type="project" value="UniProtKB-ARBA"/>
</dbReference>
<dbReference type="GO" id="GO:0019814">
    <property type="term" value="C:immunoglobulin complex"/>
    <property type="evidence" value="ECO:0007669"/>
    <property type="project" value="UniProtKB-KW"/>
</dbReference>
<dbReference type="GO" id="GO:0003823">
    <property type="term" value="F:antigen binding"/>
    <property type="evidence" value="ECO:0000318"/>
    <property type="project" value="GO_Central"/>
</dbReference>
<dbReference type="GO" id="GO:0016064">
    <property type="term" value="P:immunoglobulin mediated immune response"/>
    <property type="evidence" value="ECO:0000318"/>
    <property type="project" value="GO_Central"/>
</dbReference>
<dbReference type="CDD" id="cd04981">
    <property type="entry name" value="IgV_H"/>
    <property type="match status" value="1"/>
</dbReference>
<dbReference type="FunFam" id="2.60.40.10:FF:001372">
    <property type="entry name" value="Ig heavy chain V region M603"/>
    <property type="match status" value="1"/>
</dbReference>
<dbReference type="Gene3D" id="2.60.40.10">
    <property type="entry name" value="Immunoglobulins"/>
    <property type="match status" value="1"/>
</dbReference>
<dbReference type="InterPro" id="IPR007110">
    <property type="entry name" value="Ig-like_dom"/>
</dbReference>
<dbReference type="InterPro" id="IPR036179">
    <property type="entry name" value="Ig-like_dom_sf"/>
</dbReference>
<dbReference type="InterPro" id="IPR013783">
    <property type="entry name" value="Ig-like_fold"/>
</dbReference>
<dbReference type="InterPro" id="IPR003599">
    <property type="entry name" value="Ig_sub"/>
</dbReference>
<dbReference type="InterPro" id="IPR013106">
    <property type="entry name" value="Ig_V-set"/>
</dbReference>
<dbReference type="InterPro" id="IPR050199">
    <property type="entry name" value="IgHV"/>
</dbReference>
<dbReference type="PANTHER" id="PTHR23266">
    <property type="entry name" value="IMMUNOGLOBULIN HEAVY CHAIN"/>
    <property type="match status" value="1"/>
</dbReference>
<dbReference type="Pfam" id="PF07686">
    <property type="entry name" value="V-set"/>
    <property type="match status" value="1"/>
</dbReference>
<dbReference type="SMART" id="SM00409">
    <property type="entry name" value="IG"/>
    <property type="match status" value="1"/>
</dbReference>
<dbReference type="SMART" id="SM00406">
    <property type="entry name" value="IGv"/>
    <property type="match status" value="1"/>
</dbReference>
<dbReference type="SUPFAM" id="SSF48726">
    <property type="entry name" value="Immunoglobulin"/>
    <property type="match status" value="1"/>
</dbReference>
<dbReference type="PROSITE" id="PS50835">
    <property type="entry name" value="IG_LIKE"/>
    <property type="match status" value="1"/>
</dbReference>
<comment type="miscellaneous">
    <text>This chain was isolated from a myeloma protein that binds inulin.</text>
</comment>
<proteinExistence type="evidence at protein level"/>
<keyword id="KW-1064">Adaptive immunity</keyword>
<keyword id="KW-0903">Direct protein sequencing</keyword>
<keyword id="KW-1015">Disulfide bond</keyword>
<keyword id="KW-0391">Immunity</keyword>
<keyword id="KW-1280">Immunoglobulin</keyword>
<keyword id="KW-1185">Reference proteome</keyword>
<protein>
    <recommendedName>
        <fullName>Ig heavy chain V-III region T957</fullName>
    </recommendedName>
</protein>
<evidence type="ECO:0000255" key="1">
    <source>
        <dbReference type="PROSITE-ProRule" id="PRU00114"/>
    </source>
</evidence>
<accession>P01800</accession>
<feature type="chain" id="PRO_0000059885" description="Ig heavy chain V-III region T957">
    <location>
        <begin position="1"/>
        <end position="113" status="greater than"/>
    </location>
</feature>
<feature type="domain" description="Ig-like">
    <location>
        <begin position="1"/>
        <end position="113" status="greater than"/>
    </location>
</feature>
<feature type="disulfide bond" evidence="1">
    <location>
        <begin position="22"/>
        <end position="98"/>
    </location>
</feature>
<feature type="non-terminal residue">
    <location>
        <position position="113"/>
    </location>
</feature>
<organism>
    <name type="scientific">Mus musculus</name>
    <name type="common">Mouse</name>
    <dbReference type="NCBI Taxonomy" id="10090"/>
    <lineage>
        <taxon>Eukaryota</taxon>
        <taxon>Metazoa</taxon>
        <taxon>Chordata</taxon>
        <taxon>Craniata</taxon>
        <taxon>Vertebrata</taxon>
        <taxon>Euteleostomi</taxon>
        <taxon>Mammalia</taxon>
        <taxon>Eutheria</taxon>
        <taxon>Euarchontoglires</taxon>
        <taxon>Glires</taxon>
        <taxon>Rodentia</taxon>
        <taxon>Myomorpha</taxon>
        <taxon>Muroidea</taxon>
        <taxon>Muridae</taxon>
        <taxon>Murinae</taxon>
        <taxon>Mus</taxon>
        <taxon>Mus</taxon>
    </lineage>
</organism>
<reference key="1">
    <citation type="journal article" date="1981" name="J. Immunol.">
        <title>Immunoglobulin heavy chains from anti-inulin myeloma proteins: evidence for a new heavy chain joining segment.</title>
        <authorList>
            <person name="Rudikoff S."/>
            <person name="Potter M."/>
        </authorList>
    </citation>
    <scope>PROTEIN SEQUENCE</scope>
</reference>
<sequence>EVKLEESGGGLVQPGGSMKLSCVASGFTFSNYWMNWVRQSPEKGLEWVAEIRLKSHNYETHYAESVKGRFTISRDDSKSSVYLQMNILRAEDTGIYYCTTGFAYWGQGTLVTV</sequence>
<name>HVM31_MOUSE</name>